<gene>
    <name evidence="1" type="primary">hmuV</name>
    <name type="synonym">hemV</name>
</gene>
<organism>
    <name type="scientific">Yersinia enterocolitica</name>
    <dbReference type="NCBI Taxonomy" id="630"/>
    <lineage>
        <taxon>Bacteria</taxon>
        <taxon>Pseudomonadati</taxon>
        <taxon>Pseudomonadota</taxon>
        <taxon>Gammaproteobacteria</taxon>
        <taxon>Enterobacterales</taxon>
        <taxon>Yersiniaceae</taxon>
        <taxon>Yersinia</taxon>
    </lineage>
</organism>
<evidence type="ECO:0000255" key="1">
    <source>
        <dbReference type="HAMAP-Rule" id="MF_01718"/>
    </source>
</evidence>
<evidence type="ECO:0000305" key="2">
    <source>
    </source>
</evidence>
<keyword id="KW-0067">ATP-binding</keyword>
<keyword id="KW-0997">Cell inner membrane</keyword>
<keyword id="KW-1003">Cell membrane</keyword>
<keyword id="KW-0472">Membrane</keyword>
<keyword id="KW-0547">Nucleotide-binding</keyword>
<keyword id="KW-1278">Translocase</keyword>
<keyword id="KW-0813">Transport</keyword>
<accession>P74981</accession>
<name>HMUV_YEREN</name>
<proteinExistence type="evidence at protein level"/>
<dbReference type="EC" id="7.6.2.-" evidence="1"/>
<dbReference type="EMBL" id="X77867">
    <property type="protein sequence ID" value="CAA54864.1"/>
    <property type="molecule type" value="Genomic_DNA"/>
</dbReference>
<dbReference type="PIR" id="S54440">
    <property type="entry name" value="S54440"/>
</dbReference>
<dbReference type="RefSeq" id="WP_005175609.1">
    <property type="nucleotide sequence ID" value="NZ_NWMR01000018.1"/>
</dbReference>
<dbReference type="SMR" id="P74981"/>
<dbReference type="STRING" id="1443113.LC20_04861"/>
<dbReference type="KEGG" id="yew:CH47_3147"/>
<dbReference type="eggNOG" id="COG4559">
    <property type="taxonomic scope" value="Bacteria"/>
</dbReference>
<dbReference type="GO" id="GO:0005886">
    <property type="term" value="C:plasma membrane"/>
    <property type="evidence" value="ECO:0007669"/>
    <property type="project" value="UniProtKB-SubCell"/>
</dbReference>
<dbReference type="GO" id="GO:0005524">
    <property type="term" value="F:ATP binding"/>
    <property type="evidence" value="ECO:0007669"/>
    <property type="project" value="UniProtKB-KW"/>
</dbReference>
<dbReference type="GO" id="GO:0016887">
    <property type="term" value="F:ATP hydrolysis activity"/>
    <property type="evidence" value="ECO:0007669"/>
    <property type="project" value="InterPro"/>
</dbReference>
<dbReference type="CDD" id="cd03214">
    <property type="entry name" value="ABC_Iron-Siderophores_B12_Hemin"/>
    <property type="match status" value="1"/>
</dbReference>
<dbReference type="FunFam" id="3.40.50.300:FF:000134">
    <property type="entry name" value="Iron-enterobactin ABC transporter ATP-binding protein"/>
    <property type="match status" value="1"/>
</dbReference>
<dbReference type="Gene3D" id="3.40.50.300">
    <property type="entry name" value="P-loop containing nucleotide triphosphate hydrolases"/>
    <property type="match status" value="1"/>
</dbReference>
<dbReference type="InterPro" id="IPR003593">
    <property type="entry name" value="AAA+_ATPase"/>
</dbReference>
<dbReference type="InterPro" id="IPR003439">
    <property type="entry name" value="ABC_transporter-like_ATP-bd"/>
</dbReference>
<dbReference type="InterPro" id="IPR017871">
    <property type="entry name" value="ABC_transporter-like_CS"/>
</dbReference>
<dbReference type="InterPro" id="IPR027417">
    <property type="entry name" value="P-loop_NTPase"/>
</dbReference>
<dbReference type="NCBIfam" id="NF010068">
    <property type="entry name" value="PRK13548.1"/>
    <property type="match status" value="1"/>
</dbReference>
<dbReference type="PANTHER" id="PTHR42794">
    <property type="entry name" value="HEMIN IMPORT ATP-BINDING PROTEIN HMUV"/>
    <property type="match status" value="1"/>
</dbReference>
<dbReference type="PANTHER" id="PTHR42794:SF1">
    <property type="entry name" value="HEMIN IMPORT ATP-BINDING PROTEIN HMUV"/>
    <property type="match status" value="1"/>
</dbReference>
<dbReference type="Pfam" id="PF00005">
    <property type="entry name" value="ABC_tran"/>
    <property type="match status" value="1"/>
</dbReference>
<dbReference type="SMART" id="SM00382">
    <property type="entry name" value="AAA"/>
    <property type="match status" value="1"/>
</dbReference>
<dbReference type="SUPFAM" id="SSF52540">
    <property type="entry name" value="P-loop containing nucleoside triphosphate hydrolases"/>
    <property type="match status" value="1"/>
</dbReference>
<dbReference type="PROSITE" id="PS00211">
    <property type="entry name" value="ABC_TRANSPORTER_1"/>
    <property type="match status" value="1"/>
</dbReference>
<dbReference type="PROSITE" id="PS50893">
    <property type="entry name" value="ABC_TRANSPORTER_2"/>
    <property type="match status" value="1"/>
</dbReference>
<dbReference type="PROSITE" id="PS51261">
    <property type="entry name" value="HMUV"/>
    <property type="match status" value="1"/>
</dbReference>
<sequence>MVDTAVVDTALLEANQLSYHVQGQKLINNVSLQIASGEMVAIIGPNGAGKSTLLRLLTGYLAPSEGHCQLLGKNLNSWQPQALARTRAVMRQYSDLAFPFSVSEVIQMGRAPYGAAQNRQALQEVMAQTDCLALAQRDYRALSGGEQQRVQLARVLAQLWQPEPTSRWLFLDEPTSALDLYHQQHTLRLLRQLTLEEPLAVCCVLHDLNLAALYADRILLLAQGELVACGTPEEVLNAETLTRWYQADLGISRHPESALPQIYLRQ</sequence>
<protein>
    <recommendedName>
        <fullName evidence="1">Hemin import ATP-binding protein HmuV</fullName>
        <ecNumber evidence="1">7.6.2.-</ecNumber>
    </recommendedName>
</protein>
<comment type="function">
    <text evidence="2">Part of the ABC transporter complex HmuTUV involved in hemin import. Responsible for energy coupling to the transport system (Probable).</text>
</comment>
<comment type="subunit">
    <text evidence="1">The complex is composed of two ATP-binding proteins (HmuV), two transmembrane proteins (HmuU) and a solute-binding protein (HmuT).</text>
</comment>
<comment type="subcellular location">
    <subcellularLocation>
        <location evidence="1">Cell inner membrane</location>
        <topology evidence="1">Peripheral membrane protein</topology>
    </subcellularLocation>
</comment>
<comment type="similarity">
    <text evidence="1">Belongs to the ABC transporter superfamily. Heme (hemin) importer (TC 3.A.1.14.5) family.</text>
</comment>
<feature type="chain" id="PRO_0000269640" description="Hemin import ATP-binding protein HmuV">
    <location>
        <begin position="1"/>
        <end position="266"/>
    </location>
</feature>
<feature type="domain" description="ABC transporter" evidence="1">
    <location>
        <begin position="12"/>
        <end position="248"/>
    </location>
</feature>
<feature type="binding site" evidence="1">
    <location>
        <begin position="44"/>
        <end position="51"/>
    </location>
    <ligand>
        <name>ATP</name>
        <dbReference type="ChEBI" id="CHEBI:30616"/>
    </ligand>
</feature>
<reference key="1">
    <citation type="journal article" date="1994" name="Mol. Microbiol.">
        <title>Transport of haemin across the cytoplasmic membrane through a haemin-specific periplasmic binding-protein-dependent transport system in Yersinia enterocolitica.</title>
        <authorList>
            <person name="Stojiljkovic I."/>
            <person name="Hantke K."/>
        </authorList>
    </citation>
    <scope>NUCLEOTIDE SEQUENCE [GENOMIC DNA]</scope>
    <scope>FUNCTION IN HEMIN TRANSPORT</scope>
    <source>
        <strain>ATCC 51872 / WA-C / Serotype O:8</strain>
    </source>
</reference>